<evidence type="ECO:0000255" key="1">
    <source>
        <dbReference type="HAMAP-Rule" id="MF_00686"/>
    </source>
</evidence>
<accession>A1K9D9</accession>
<organism>
    <name type="scientific">Azoarcus sp. (strain BH72)</name>
    <dbReference type="NCBI Taxonomy" id="418699"/>
    <lineage>
        <taxon>Bacteria</taxon>
        <taxon>Pseudomonadati</taxon>
        <taxon>Pseudomonadota</taxon>
        <taxon>Betaproteobacteria</taxon>
        <taxon>Rhodocyclales</taxon>
        <taxon>Zoogloeaceae</taxon>
        <taxon>Azoarcus</taxon>
    </lineage>
</organism>
<protein>
    <recommendedName>
        <fullName evidence="1">Probable Fe(2+)-trafficking protein</fullName>
    </recommendedName>
</protein>
<comment type="function">
    <text evidence="1">Could be a mediator in iron transactions between iron acquisition and iron-requiring processes, such as synthesis and/or repair of Fe-S clusters in biosynthetic enzymes.</text>
</comment>
<comment type="similarity">
    <text evidence="1">Belongs to the Fe(2+)-trafficking protein family.</text>
</comment>
<sequence>MARMVNCIKLGREAEGLDLPPVPGELGKRIYESVSKEAWQQWVKYQTMLINENRLNLMDPRARKYLSEQMEKHFFEGGADAIGGFVPPAQ</sequence>
<name>FETP_AZOSB</name>
<dbReference type="EMBL" id="AM406670">
    <property type="protein sequence ID" value="CAL95444.1"/>
    <property type="molecule type" value="Genomic_DNA"/>
</dbReference>
<dbReference type="RefSeq" id="WP_011766554.1">
    <property type="nucleotide sequence ID" value="NC_008702.1"/>
</dbReference>
<dbReference type="SMR" id="A1K9D9"/>
<dbReference type="STRING" id="62928.azo2828"/>
<dbReference type="KEGG" id="aoa:dqs_2967"/>
<dbReference type="KEGG" id="azo:azo2828"/>
<dbReference type="eggNOG" id="COG2924">
    <property type="taxonomic scope" value="Bacteria"/>
</dbReference>
<dbReference type="HOGENOM" id="CLU_170994_0_0_4"/>
<dbReference type="OrthoDB" id="9804318at2"/>
<dbReference type="Proteomes" id="UP000002588">
    <property type="component" value="Chromosome"/>
</dbReference>
<dbReference type="GO" id="GO:0005829">
    <property type="term" value="C:cytosol"/>
    <property type="evidence" value="ECO:0007669"/>
    <property type="project" value="TreeGrafter"/>
</dbReference>
<dbReference type="GO" id="GO:0005506">
    <property type="term" value="F:iron ion binding"/>
    <property type="evidence" value="ECO:0007669"/>
    <property type="project" value="UniProtKB-UniRule"/>
</dbReference>
<dbReference type="GO" id="GO:0034599">
    <property type="term" value="P:cellular response to oxidative stress"/>
    <property type="evidence" value="ECO:0007669"/>
    <property type="project" value="TreeGrafter"/>
</dbReference>
<dbReference type="FunFam" id="1.10.3880.10:FF:000001">
    <property type="entry name" value="Probable Fe(2+)-trafficking protein"/>
    <property type="match status" value="1"/>
</dbReference>
<dbReference type="Gene3D" id="1.10.3880.10">
    <property type="entry name" value="Fe(II) trafficking protein YggX"/>
    <property type="match status" value="1"/>
</dbReference>
<dbReference type="HAMAP" id="MF_00686">
    <property type="entry name" value="Fe_traffic_YggX"/>
    <property type="match status" value="1"/>
</dbReference>
<dbReference type="InterPro" id="IPR007457">
    <property type="entry name" value="Fe_traffick_prot_YggX"/>
</dbReference>
<dbReference type="InterPro" id="IPR036766">
    <property type="entry name" value="Fe_traffick_prot_YggX_sf"/>
</dbReference>
<dbReference type="NCBIfam" id="NF003817">
    <property type="entry name" value="PRK05408.1"/>
    <property type="match status" value="1"/>
</dbReference>
<dbReference type="PANTHER" id="PTHR36965">
    <property type="entry name" value="FE(2+)-TRAFFICKING PROTEIN-RELATED"/>
    <property type="match status" value="1"/>
</dbReference>
<dbReference type="PANTHER" id="PTHR36965:SF1">
    <property type="entry name" value="FE(2+)-TRAFFICKING PROTEIN-RELATED"/>
    <property type="match status" value="1"/>
</dbReference>
<dbReference type="Pfam" id="PF04362">
    <property type="entry name" value="Iron_traffic"/>
    <property type="match status" value="1"/>
</dbReference>
<dbReference type="PIRSF" id="PIRSF029827">
    <property type="entry name" value="Fe_traffic_YggX"/>
    <property type="match status" value="1"/>
</dbReference>
<dbReference type="SUPFAM" id="SSF111148">
    <property type="entry name" value="YggX-like"/>
    <property type="match status" value="1"/>
</dbReference>
<gene>
    <name type="ordered locus">azo2828</name>
</gene>
<feature type="chain" id="PRO_1000045017" description="Probable Fe(2+)-trafficking protein">
    <location>
        <begin position="1"/>
        <end position="90"/>
    </location>
</feature>
<proteinExistence type="inferred from homology"/>
<reference key="1">
    <citation type="journal article" date="2006" name="Nat. Biotechnol.">
        <title>Complete genome of the mutualistic, N2-fixing grass endophyte Azoarcus sp. strain BH72.</title>
        <authorList>
            <person name="Krause A."/>
            <person name="Ramakumar A."/>
            <person name="Bartels D."/>
            <person name="Battistoni F."/>
            <person name="Bekel T."/>
            <person name="Boch J."/>
            <person name="Boehm M."/>
            <person name="Friedrich F."/>
            <person name="Hurek T."/>
            <person name="Krause L."/>
            <person name="Linke B."/>
            <person name="McHardy A.C."/>
            <person name="Sarkar A."/>
            <person name="Schneiker S."/>
            <person name="Syed A.A."/>
            <person name="Thauer R."/>
            <person name="Vorhoelter F.-J."/>
            <person name="Weidner S."/>
            <person name="Puehler A."/>
            <person name="Reinhold-Hurek B."/>
            <person name="Kaiser O."/>
            <person name="Goesmann A."/>
        </authorList>
    </citation>
    <scope>NUCLEOTIDE SEQUENCE [LARGE SCALE GENOMIC DNA]</scope>
    <source>
        <strain>BH72</strain>
    </source>
</reference>
<keyword id="KW-0408">Iron</keyword>
<keyword id="KW-1185">Reference proteome</keyword>